<dbReference type="EC" id="4.6.1.12" evidence="1"/>
<dbReference type="EMBL" id="CP000764">
    <property type="protein sequence ID" value="ABS20456.1"/>
    <property type="molecule type" value="Genomic_DNA"/>
</dbReference>
<dbReference type="RefSeq" id="WP_011983225.1">
    <property type="nucleotide sequence ID" value="NC_009674.1"/>
</dbReference>
<dbReference type="SMR" id="A7GJZ8"/>
<dbReference type="STRING" id="315749.Bcer98_0081"/>
<dbReference type="GeneID" id="33895402"/>
<dbReference type="KEGG" id="bcy:Bcer98_0081"/>
<dbReference type="eggNOG" id="COG0245">
    <property type="taxonomic scope" value="Bacteria"/>
</dbReference>
<dbReference type="HOGENOM" id="CLU_084630_2_0_9"/>
<dbReference type="OrthoDB" id="9804336at2"/>
<dbReference type="UniPathway" id="UPA00056">
    <property type="reaction ID" value="UER00095"/>
</dbReference>
<dbReference type="Proteomes" id="UP000002300">
    <property type="component" value="Chromosome"/>
</dbReference>
<dbReference type="GO" id="GO:0008685">
    <property type="term" value="F:2-C-methyl-D-erythritol 2,4-cyclodiphosphate synthase activity"/>
    <property type="evidence" value="ECO:0007669"/>
    <property type="project" value="UniProtKB-UniRule"/>
</dbReference>
<dbReference type="GO" id="GO:0046872">
    <property type="term" value="F:metal ion binding"/>
    <property type="evidence" value="ECO:0007669"/>
    <property type="project" value="UniProtKB-KW"/>
</dbReference>
<dbReference type="GO" id="GO:0019288">
    <property type="term" value="P:isopentenyl diphosphate biosynthetic process, methylerythritol 4-phosphate pathway"/>
    <property type="evidence" value="ECO:0007669"/>
    <property type="project" value="UniProtKB-UniRule"/>
</dbReference>
<dbReference type="GO" id="GO:0016114">
    <property type="term" value="P:terpenoid biosynthetic process"/>
    <property type="evidence" value="ECO:0007669"/>
    <property type="project" value="InterPro"/>
</dbReference>
<dbReference type="CDD" id="cd00554">
    <property type="entry name" value="MECDP_synthase"/>
    <property type="match status" value="1"/>
</dbReference>
<dbReference type="FunFam" id="3.30.1330.50:FF:000001">
    <property type="entry name" value="2-C-methyl-D-erythritol 2,4-cyclodiphosphate synthase"/>
    <property type="match status" value="1"/>
</dbReference>
<dbReference type="Gene3D" id="3.30.1330.50">
    <property type="entry name" value="2-C-methyl-D-erythritol 2,4-cyclodiphosphate synthase"/>
    <property type="match status" value="1"/>
</dbReference>
<dbReference type="HAMAP" id="MF_00107">
    <property type="entry name" value="IspF"/>
    <property type="match status" value="1"/>
</dbReference>
<dbReference type="InterPro" id="IPR003526">
    <property type="entry name" value="MECDP_synthase"/>
</dbReference>
<dbReference type="InterPro" id="IPR020555">
    <property type="entry name" value="MECDP_synthase_CS"/>
</dbReference>
<dbReference type="InterPro" id="IPR036571">
    <property type="entry name" value="MECDP_synthase_sf"/>
</dbReference>
<dbReference type="NCBIfam" id="TIGR00151">
    <property type="entry name" value="ispF"/>
    <property type="match status" value="1"/>
</dbReference>
<dbReference type="PANTHER" id="PTHR43181">
    <property type="entry name" value="2-C-METHYL-D-ERYTHRITOL 2,4-CYCLODIPHOSPHATE SYNTHASE, CHLOROPLASTIC"/>
    <property type="match status" value="1"/>
</dbReference>
<dbReference type="PANTHER" id="PTHR43181:SF1">
    <property type="entry name" value="2-C-METHYL-D-ERYTHRITOL 2,4-CYCLODIPHOSPHATE SYNTHASE, CHLOROPLASTIC"/>
    <property type="match status" value="1"/>
</dbReference>
<dbReference type="Pfam" id="PF02542">
    <property type="entry name" value="YgbB"/>
    <property type="match status" value="1"/>
</dbReference>
<dbReference type="SUPFAM" id="SSF69765">
    <property type="entry name" value="IpsF-like"/>
    <property type="match status" value="1"/>
</dbReference>
<dbReference type="PROSITE" id="PS01350">
    <property type="entry name" value="ISPF"/>
    <property type="match status" value="1"/>
</dbReference>
<keyword id="KW-0414">Isoprene biosynthesis</keyword>
<keyword id="KW-0456">Lyase</keyword>
<keyword id="KW-0479">Metal-binding</keyword>
<feature type="chain" id="PRO_1000075907" description="2-C-methyl-D-erythritol 2,4-cyclodiphosphate synthase">
    <location>
        <begin position="1"/>
        <end position="158"/>
    </location>
</feature>
<feature type="binding site" evidence="1">
    <location>
        <begin position="9"/>
        <end position="11"/>
    </location>
    <ligand>
        <name>4-CDP-2-C-methyl-D-erythritol 2-phosphate</name>
        <dbReference type="ChEBI" id="CHEBI:57919"/>
    </ligand>
</feature>
<feature type="binding site" evidence="1">
    <location>
        <position position="9"/>
    </location>
    <ligand>
        <name>a divalent metal cation</name>
        <dbReference type="ChEBI" id="CHEBI:60240"/>
    </ligand>
</feature>
<feature type="binding site" evidence="1">
    <location>
        <position position="11"/>
    </location>
    <ligand>
        <name>a divalent metal cation</name>
        <dbReference type="ChEBI" id="CHEBI:60240"/>
    </ligand>
</feature>
<feature type="binding site" evidence="1">
    <location>
        <begin position="35"/>
        <end position="36"/>
    </location>
    <ligand>
        <name>4-CDP-2-C-methyl-D-erythritol 2-phosphate</name>
        <dbReference type="ChEBI" id="CHEBI:57919"/>
    </ligand>
</feature>
<feature type="binding site" evidence="1">
    <location>
        <position position="43"/>
    </location>
    <ligand>
        <name>a divalent metal cation</name>
        <dbReference type="ChEBI" id="CHEBI:60240"/>
    </ligand>
</feature>
<feature type="binding site" evidence="1">
    <location>
        <begin position="57"/>
        <end position="59"/>
    </location>
    <ligand>
        <name>4-CDP-2-C-methyl-D-erythritol 2-phosphate</name>
        <dbReference type="ChEBI" id="CHEBI:57919"/>
    </ligand>
</feature>
<feature type="binding site" evidence="1">
    <location>
        <begin position="62"/>
        <end position="66"/>
    </location>
    <ligand>
        <name>4-CDP-2-C-methyl-D-erythritol 2-phosphate</name>
        <dbReference type="ChEBI" id="CHEBI:57919"/>
    </ligand>
</feature>
<feature type="binding site" evidence="1">
    <location>
        <begin position="101"/>
        <end position="107"/>
    </location>
    <ligand>
        <name>4-CDP-2-C-methyl-D-erythritol 2-phosphate</name>
        <dbReference type="ChEBI" id="CHEBI:57919"/>
    </ligand>
</feature>
<feature type="binding site" evidence="1">
    <location>
        <begin position="133"/>
        <end position="136"/>
    </location>
    <ligand>
        <name>4-CDP-2-C-methyl-D-erythritol 2-phosphate</name>
        <dbReference type="ChEBI" id="CHEBI:57919"/>
    </ligand>
</feature>
<feature type="binding site" evidence="1">
    <location>
        <position position="140"/>
    </location>
    <ligand>
        <name>4-CDP-2-C-methyl-D-erythritol 2-phosphate</name>
        <dbReference type="ChEBI" id="CHEBI:57919"/>
    </ligand>
</feature>
<feature type="binding site" evidence="1">
    <location>
        <position position="143"/>
    </location>
    <ligand>
        <name>4-CDP-2-C-methyl-D-erythritol 2-phosphate</name>
        <dbReference type="ChEBI" id="CHEBI:57919"/>
    </ligand>
</feature>
<feature type="site" description="Transition state stabilizer" evidence="1">
    <location>
        <position position="35"/>
    </location>
</feature>
<feature type="site" description="Transition state stabilizer" evidence="1">
    <location>
        <position position="134"/>
    </location>
</feature>
<reference key="1">
    <citation type="journal article" date="2008" name="Chem. Biol. Interact.">
        <title>Extending the Bacillus cereus group genomics to putative food-borne pathogens of different toxicity.</title>
        <authorList>
            <person name="Lapidus A."/>
            <person name="Goltsman E."/>
            <person name="Auger S."/>
            <person name="Galleron N."/>
            <person name="Segurens B."/>
            <person name="Dossat C."/>
            <person name="Land M.L."/>
            <person name="Broussolle V."/>
            <person name="Brillard J."/>
            <person name="Guinebretiere M.-H."/>
            <person name="Sanchis V."/>
            <person name="Nguen-the C."/>
            <person name="Lereclus D."/>
            <person name="Richardson P."/>
            <person name="Wincker P."/>
            <person name="Weissenbach J."/>
            <person name="Ehrlich S.D."/>
            <person name="Sorokin A."/>
        </authorList>
    </citation>
    <scope>NUCLEOTIDE SEQUENCE [LARGE SCALE GENOMIC DNA]</scope>
    <source>
        <strain>DSM 22905 / CIP 110041 / 391-98 / NVH 391-98</strain>
    </source>
</reference>
<accession>A7GJZ8</accession>
<organism>
    <name type="scientific">Bacillus cytotoxicus (strain DSM 22905 / CIP 110041 / 391-98 / NVH 391-98)</name>
    <dbReference type="NCBI Taxonomy" id="315749"/>
    <lineage>
        <taxon>Bacteria</taxon>
        <taxon>Bacillati</taxon>
        <taxon>Bacillota</taxon>
        <taxon>Bacilli</taxon>
        <taxon>Bacillales</taxon>
        <taxon>Bacillaceae</taxon>
        <taxon>Bacillus</taxon>
        <taxon>Bacillus cereus group</taxon>
    </lineage>
</organism>
<name>ISPF_BACCN</name>
<protein>
    <recommendedName>
        <fullName evidence="1">2-C-methyl-D-erythritol 2,4-cyclodiphosphate synthase</fullName>
        <shortName evidence="1">MECDP-synthase</shortName>
        <shortName evidence="1">MECPP-synthase</shortName>
        <shortName evidence="1">MECPS</shortName>
        <ecNumber evidence="1">4.6.1.12</ecNumber>
    </recommendedName>
</protein>
<sequence>MFRIGQGFDVHEFAEGRPLIIGGITIPYEKGLLGHSDADVLLHTIADACLGAIAAGDIGKHFPDTDPAFKDADSAVLLQKVWEFVREQGYELGNLDCTIIAQKPKMAPHIESMRKRISELLETSIDNINVKATTTEKLGFTGREEGIASQAVVLLQKK</sequence>
<evidence type="ECO:0000255" key="1">
    <source>
        <dbReference type="HAMAP-Rule" id="MF_00107"/>
    </source>
</evidence>
<proteinExistence type="inferred from homology"/>
<comment type="function">
    <text evidence="1">Involved in the biosynthesis of isopentenyl diphosphate (IPP) and dimethylallyl diphosphate (DMAPP), two major building blocks of isoprenoid compounds. Catalyzes the conversion of 4-diphosphocytidyl-2-C-methyl-D-erythritol 2-phosphate (CDP-ME2P) to 2-C-methyl-D-erythritol 2,4-cyclodiphosphate (ME-CPP) with a corresponding release of cytidine 5-monophosphate (CMP).</text>
</comment>
<comment type="catalytic activity">
    <reaction evidence="1">
        <text>4-CDP-2-C-methyl-D-erythritol 2-phosphate = 2-C-methyl-D-erythritol 2,4-cyclic diphosphate + CMP</text>
        <dbReference type="Rhea" id="RHEA:23864"/>
        <dbReference type="ChEBI" id="CHEBI:57919"/>
        <dbReference type="ChEBI" id="CHEBI:58483"/>
        <dbReference type="ChEBI" id="CHEBI:60377"/>
        <dbReference type="EC" id="4.6.1.12"/>
    </reaction>
</comment>
<comment type="cofactor">
    <cofactor evidence="1">
        <name>a divalent metal cation</name>
        <dbReference type="ChEBI" id="CHEBI:60240"/>
    </cofactor>
    <text evidence="1">Binds 1 divalent metal cation per subunit.</text>
</comment>
<comment type="pathway">
    <text evidence="1">Isoprenoid biosynthesis; isopentenyl diphosphate biosynthesis via DXP pathway; isopentenyl diphosphate from 1-deoxy-D-xylulose 5-phosphate: step 4/6.</text>
</comment>
<comment type="subunit">
    <text evidence="1">Homotrimer.</text>
</comment>
<comment type="similarity">
    <text evidence="1">Belongs to the IspF family.</text>
</comment>
<gene>
    <name evidence="1" type="primary">ispF</name>
    <name type="ordered locus">Bcer98_0081</name>
</gene>